<name>GTR6_MOUSE</name>
<organism>
    <name type="scientific">Mus musculus</name>
    <name type="common">Mouse</name>
    <dbReference type="NCBI Taxonomy" id="10090"/>
    <lineage>
        <taxon>Eukaryota</taxon>
        <taxon>Metazoa</taxon>
        <taxon>Chordata</taxon>
        <taxon>Craniata</taxon>
        <taxon>Vertebrata</taxon>
        <taxon>Euteleostomi</taxon>
        <taxon>Mammalia</taxon>
        <taxon>Eutheria</taxon>
        <taxon>Euarchontoglires</taxon>
        <taxon>Glires</taxon>
        <taxon>Rodentia</taxon>
        <taxon>Myomorpha</taxon>
        <taxon>Muroidea</taxon>
        <taxon>Muridae</taxon>
        <taxon>Murinae</taxon>
        <taxon>Mus</taxon>
        <taxon>Mus</taxon>
    </lineage>
</organism>
<proteinExistence type="evidence at protein level"/>
<protein>
    <recommendedName>
        <fullName evidence="7">Solute carrier family 2, facilitated glucose transporter member 6</fullName>
    </recommendedName>
    <alternativeName>
        <fullName evidence="6">Glucose transporter type 6</fullName>
        <shortName evidence="6">GLUT-6</shortName>
    </alternativeName>
</protein>
<gene>
    <name evidence="8" type="primary">Slc2a6</name>
    <name evidence="6" type="synonym">Glut6</name>
</gene>
<reference key="1">
    <citation type="journal article" date="2005" name="Science">
        <title>The transcriptional landscape of the mammalian genome.</title>
        <authorList>
            <person name="Carninci P."/>
            <person name="Kasukawa T."/>
            <person name="Katayama S."/>
            <person name="Gough J."/>
            <person name="Frith M.C."/>
            <person name="Maeda N."/>
            <person name="Oyama R."/>
            <person name="Ravasi T."/>
            <person name="Lenhard B."/>
            <person name="Wells C."/>
            <person name="Kodzius R."/>
            <person name="Shimokawa K."/>
            <person name="Bajic V.B."/>
            <person name="Brenner S.E."/>
            <person name="Batalov S."/>
            <person name="Forrest A.R."/>
            <person name="Zavolan M."/>
            <person name="Davis M.J."/>
            <person name="Wilming L.G."/>
            <person name="Aidinis V."/>
            <person name="Allen J.E."/>
            <person name="Ambesi-Impiombato A."/>
            <person name="Apweiler R."/>
            <person name="Aturaliya R.N."/>
            <person name="Bailey T.L."/>
            <person name="Bansal M."/>
            <person name="Baxter L."/>
            <person name="Beisel K.W."/>
            <person name="Bersano T."/>
            <person name="Bono H."/>
            <person name="Chalk A.M."/>
            <person name="Chiu K.P."/>
            <person name="Choudhary V."/>
            <person name="Christoffels A."/>
            <person name="Clutterbuck D.R."/>
            <person name="Crowe M.L."/>
            <person name="Dalla E."/>
            <person name="Dalrymple B.P."/>
            <person name="de Bono B."/>
            <person name="Della Gatta G."/>
            <person name="di Bernardo D."/>
            <person name="Down T."/>
            <person name="Engstrom P."/>
            <person name="Fagiolini M."/>
            <person name="Faulkner G."/>
            <person name="Fletcher C.F."/>
            <person name="Fukushima T."/>
            <person name="Furuno M."/>
            <person name="Futaki S."/>
            <person name="Gariboldi M."/>
            <person name="Georgii-Hemming P."/>
            <person name="Gingeras T.R."/>
            <person name="Gojobori T."/>
            <person name="Green R.E."/>
            <person name="Gustincich S."/>
            <person name="Harbers M."/>
            <person name="Hayashi Y."/>
            <person name="Hensch T.K."/>
            <person name="Hirokawa N."/>
            <person name="Hill D."/>
            <person name="Huminiecki L."/>
            <person name="Iacono M."/>
            <person name="Ikeo K."/>
            <person name="Iwama A."/>
            <person name="Ishikawa T."/>
            <person name="Jakt M."/>
            <person name="Kanapin A."/>
            <person name="Katoh M."/>
            <person name="Kawasawa Y."/>
            <person name="Kelso J."/>
            <person name="Kitamura H."/>
            <person name="Kitano H."/>
            <person name="Kollias G."/>
            <person name="Krishnan S.P."/>
            <person name="Kruger A."/>
            <person name="Kummerfeld S.K."/>
            <person name="Kurochkin I.V."/>
            <person name="Lareau L.F."/>
            <person name="Lazarevic D."/>
            <person name="Lipovich L."/>
            <person name="Liu J."/>
            <person name="Liuni S."/>
            <person name="McWilliam S."/>
            <person name="Madan Babu M."/>
            <person name="Madera M."/>
            <person name="Marchionni L."/>
            <person name="Matsuda H."/>
            <person name="Matsuzawa S."/>
            <person name="Miki H."/>
            <person name="Mignone F."/>
            <person name="Miyake S."/>
            <person name="Morris K."/>
            <person name="Mottagui-Tabar S."/>
            <person name="Mulder N."/>
            <person name="Nakano N."/>
            <person name="Nakauchi H."/>
            <person name="Ng P."/>
            <person name="Nilsson R."/>
            <person name="Nishiguchi S."/>
            <person name="Nishikawa S."/>
            <person name="Nori F."/>
            <person name="Ohara O."/>
            <person name="Okazaki Y."/>
            <person name="Orlando V."/>
            <person name="Pang K.C."/>
            <person name="Pavan W.J."/>
            <person name="Pavesi G."/>
            <person name="Pesole G."/>
            <person name="Petrovsky N."/>
            <person name="Piazza S."/>
            <person name="Reed J."/>
            <person name="Reid J.F."/>
            <person name="Ring B.Z."/>
            <person name="Ringwald M."/>
            <person name="Rost B."/>
            <person name="Ruan Y."/>
            <person name="Salzberg S.L."/>
            <person name="Sandelin A."/>
            <person name="Schneider C."/>
            <person name="Schoenbach C."/>
            <person name="Sekiguchi K."/>
            <person name="Semple C.A."/>
            <person name="Seno S."/>
            <person name="Sessa L."/>
            <person name="Sheng Y."/>
            <person name="Shibata Y."/>
            <person name="Shimada H."/>
            <person name="Shimada K."/>
            <person name="Silva D."/>
            <person name="Sinclair B."/>
            <person name="Sperling S."/>
            <person name="Stupka E."/>
            <person name="Sugiura K."/>
            <person name="Sultana R."/>
            <person name="Takenaka Y."/>
            <person name="Taki K."/>
            <person name="Tammoja K."/>
            <person name="Tan S.L."/>
            <person name="Tang S."/>
            <person name="Taylor M.S."/>
            <person name="Tegner J."/>
            <person name="Teichmann S.A."/>
            <person name="Ueda H.R."/>
            <person name="van Nimwegen E."/>
            <person name="Verardo R."/>
            <person name="Wei C.L."/>
            <person name="Yagi K."/>
            <person name="Yamanishi H."/>
            <person name="Zabarovsky E."/>
            <person name="Zhu S."/>
            <person name="Zimmer A."/>
            <person name="Hide W."/>
            <person name="Bult C."/>
            <person name="Grimmond S.M."/>
            <person name="Teasdale R.D."/>
            <person name="Liu E.T."/>
            <person name="Brusic V."/>
            <person name="Quackenbush J."/>
            <person name="Wahlestedt C."/>
            <person name="Mattick J.S."/>
            <person name="Hume D.A."/>
            <person name="Kai C."/>
            <person name="Sasaki D."/>
            <person name="Tomaru Y."/>
            <person name="Fukuda S."/>
            <person name="Kanamori-Katayama M."/>
            <person name="Suzuki M."/>
            <person name="Aoki J."/>
            <person name="Arakawa T."/>
            <person name="Iida J."/>
            <person name="Imamura K."/>
            <person name="Itoh M."/>
            <person name="Kato T."/>
            <person name="Kawaji H."/>
            <person name="Kawagashira N."/>
            <person name="Kawashima T."/>
            <person name="Kojima M."/>
            <person name="Kondo S."/>
            <person name="Konno H."/>
            <person name="Nakano K."/>
            <person name="Ninomiya N."/>
            <person name="Nishio T."/>
            <person name="Okada M."/>
            <person name="Plessy C."/>
            <person name="Shibata K."/>
            <person name="Shiraki T."/>
            <person name="Suzuki S."/>
            <person name="Tagami M."/>
            <person name="Waki K."/>
            <person name="Watahiki A."/>
            <person name="Okamura-Oho Y."/>
            <person name="Suzuki H."/>
            <person name="Kawai J."/>
            <person name="Hayashizaki Y."/>
        </authorList>
    </citation>
    <scope>NUCLEOTIDE SEQUENCE [LARGE SCALE MRNA]</scope>
    <source>
        <strain>C57BL/6J</strain>
        <strain>NOD</strain>
        <tissue>Bone marrow</tissue>
        <tissue>Mammary gland</tissue>
    </source>
</reference>
<reference key="2">
    <citation type="journal article" date="2009" name="PLoS Biol.">
        <title>Lineage-specific biology revealed by a finished genome assembly of the mouse.</title>
        <authorList>
            <person name="Church D.M."/>
            <person name="Goodstadt L."/>
            <person name="Hillier L.W."/>
            <person name="Zody M.C."/>
            <person name="Goldstein S."/>
            <person name="She X."/>
            <person name="Bult C.J."/>
            <person name="Agarwala R."/>
            <person name="Cherry J.L."/>
            <person name="DiCuccio M."/>
            <person name="Hlavina W."/>
            <person name="Kapustin Y."/>
            <person name="Meric P."/>
            <person name="Maglott D."/>
            <person name="Birtle Z."/>
            <person name="Marques A.C."/>
            <person name="Graves T."/>
            <person name="Zhou S."/>
            <person name="Teague B."/>
            <person name="Potamousis K."/>
            <person name="Churas C."/>
            <person name="Place M."/>
            <person name="Herschleb J."/>
            <person name="Runnheim R."/>
            <person name="Forrest D."/>
            <person name="Amos-Landgraf J."/>
            <person name="Schwartz D.C."/>
            <person name="Cheng Z."/>
            <person name="Lindblad-Toh K."/>
            <person name="Eichler E.E."/>
            <person name="Ponting C.P."/>
        </authorList>
    </citation>
    <scope>NUCLEOTIDE SEQUENCE [LARGE SCALE GENOMIC DNA]</scope>
    <source>
        <strain>C57BL/6J</strain>
    </source>
</reference>
<reference key="3">
    <citation type="submission" date="2005-07" db="EMBL/GenBank/DDBJ databases">
        <authorList>
            <person name="Mural R.J."/>
            <person name="Adams M.D."/>
            <person name="Myers E.W."/>
            <person name="Smith H.O."/>
            <person name="Venter J.C."/>
        </authorList>
    </citation>
    <scope>NUCLEOTIDE SEQUENCE [LARGE SCALE GENOMIC DNA]</scope>
</reference>
<reference key="4">
    <citation type="journal article" date="2004" name="Genome Res.">
        <title>The status, quality, and expansion of the NIH full-length cDNA project: the Mammalian Gene Collection (MGC).</title>
        <authorList>
            <consortium name="The MGC Project Team"/>
        </authorList>
    </citation>
    <scope>NUCLEOTIDE SEQUENCE [LARGE SCALE MRNA] (ISOFORM 2)</scope>
    <source>
        <tissue>Brain</tissue>
    </source>
</reference>
<reference key="5">
    <citation type="journal article" date="2007" name="J. Immunol.">
        <title>Quantitative time-resolved phosphoproteomic analysis of mast cell signaling.</title>
        <authorList>
            <person name="Cao L."/>
            <person name="Yu K."/>
            <person name="Banh C."/>
            <person name="Nguyen V."/>
            <person name="Ritz A."/>
            <person name="Raphael B.J."/>
            <person name="Kawakami Y."/>
            <person name="Kawakami T."/>
            <person name="Salomon A.R."/>
        </authorList>
    </citation>
    <scope>IDENTIFICATION BY MASS SPECTROMETRY [LARGE SCALE ANALYSIS]</scope>
</reference>
<reference key="6">
    <citation type="journal article" date="2018" name="Am. J. Physiol.">
        <title>Knockout of glucose transporter GLUT6 has minimal effects on whole body metabolic physiology in mice.</title>
        <authorList>
            <person name="Byrne F.L."/>
            <person name="Olzomer E.M."/>
            <person name="Brink R."/>
            <person name="Hoehn K.L."/>
        </authorList>
    </citation>
    <scope>DISRUPTION PHENOTYPE</scope>
    <scope>TISSUE SPECIFICITY</scope>
</reference>
<reference key="7">
    <citation type="journal article" date="2019" name="FEBS Lett.">
        <title>GLUT6 is a lysosomal transporter that is regulated by inflammatory stimuli and modulates glycolysis in macrophages.</title>
        <authorList>
            <person name="Maedera S."/>
            <person name="Mizuno T."/>
            <person name="Ishiguro H."/>
            <person name="Ito T."/>
            <person name="Soga T."/>
            <person name="Kusuhara H."/>
        </authorList>
    </citation>
    <scope>FUNCTION</scope>
    <scope>DISRUPTION PHENOTYPE</scope>
</reference>
<keyword id="KW-0025">Alternative splicing</keyword>
<keyword id="KW-0325">Glycoprotein</keyword>
<keyword id="KW-0458">Lysosome</keyword>
<keyword id="KW-0472">Membrane</keyword>
<keyword id="KW-1185">Reference proteome</keyword>
<keyword id="KW-0762">Sugar transport</keyword>
<keyword id="KW-0812">Transmembrane</keyword>
<keyword id="KW-1133">Transmembrane helix</keyword>
<keyword id="KW-0813">Transport</keyword>
<dbReference type="EMBL" id="AK089246">
    <property type="protein sequence ID" value="BAC40811.1"/>
    <property type="molecule type" value="mRNA"/>
</dbReference>
<dbReference type="EMBL" id="AK150104">
    <property type="protein sequence ID" value="BAE29311.1"/>
    <property type="molecule type" value="mRNA"/>
</dbReference>
<dbReference type="EMBL" id="AK166312">
    <property type="protein sequence ID" value="BAE38697.1"/>
    <property type="molecule type" value="mRNA"/>
</dbReference>
<dbReference type="EMBL" id="AL845266">
    <property type="status" value="NOT_ANNOTATED_CDS"/>
    <property type="molecule type" value="Genomic_DNA"/>
</dbReference>
<dbReference type="EMBL" id="CH466542">
    <property type="protein sequence ID" value="EDL08351.1"/>
    <property type="molecule type" value="Genomic_DNA"/>
</dbReference>
<dbReference type="EMBL" id="BC141168">
    <property type="protein sequence ID" value="AAI41169.1"/>
    <property type="molecule type" value="mRNA"/>
</dbReference>
<dbReference type="CCDS" id="CCDS15822.1">
    <molecule id="Q3UDF0-1"/>
</dbReference>
<dbReference type="CCDS" id="CCDS50544.1">
    <molecule id="Q3UDF0-2"/>
</dbReference>
<dbReference type="RefSeq" id="NP_001171098.1">
    <molecule id="Q3UDF0-2"/>
    <property type="nucleotide sequence ID" value="NM_001177627.1"/>
</dbReference>
<dbReference type="RefSeq" id="NP_766247.2">
    <molecule id="Q3UDF0-1"/>
    <property type="nucleotide sequence ID" value="NM_172659.2"/>
</dbReference>
<dbReference type="SMR" id="Q3UDF0"/>
<dbReference type="FunCoup" id="Q3UDF0">
    <property type="interactions" value="46"/>
</dbReference>
<dbReference type="STRING" id="10090.ENSMUSP00000049103"/>
<dbReference type="GlyCosmos" id="Q3UDF0">
    <property type="glycosylation" value="2 sites, No reported glycans"/>
</dbReference>
<dbReference type="GlyGen" id="Q3UDF0">
    <property type="glycosylation" value="3 sites"/>
</dbReference>
<dbReference type="iPTMnet" id="Q3UDF0"/>
<dbReference type="PhosphoSitePlus" id="Q3UDF0"/>
<dbReference type="PaxDb" id="10090-ENSMUSP00000049103"/>
<dbReference type="ProteomicsDB" id="330692">
    <molecule id="Q3UDF0-1"/>
</dbReference>
<dbReference type="ProteomicsDB" id="340807"/>
<dbReference type="Antibodypedia" id="18448">
    <property type="antibodies" value="127 antibodies from 21 providers"/>
</dbReference>
<dbReference type="DNASU" id="227659"/>
<dbReference type="Ensembl" id="ENSMUST00000045702.6">
    <molecule id="Q3UDF0-1"/>
    <property type="protein sequence ID" value="ENSMUSP00000049103.6"/>
    <property type="gene ID" value="ENSMUSG00000036067.13"/>
</dbReference>
<dbReference type="Ensembl" id="ENSMUST00000102890.11">
    <molecule id="Q3UDF0-2"/>
    <property type="protein sequence ID" value="ENSMUSP00000099954.5"/>
    <property type="gene ID" value="ENSMUSG00000036067.13"/>
</dbReference>
<dbReference type="GeneID" id="227659"/>
<dbReference type="KEGG" id="mmu:227659"/>
<dbReference type="UCSC" id="uc008iwv.1">
    <molecule id="Q3UDF0-1"/>
    <property type="organism name" value="mouse"/>
</dbReference>
<dbReference type="UCSC" id="uc008iww.1">
    <property type="organism name" value="mouse"/>
</dbReference>
<dbReference type="AGR" id="MGI:2443286"/>
<dbReference type="CTD" id="11182"/>
<dbReference type="MGI" id="MGI:2443286">
    <property type="gene designation" value="Slc2a6"/>
</dbReference>
<dbReference type="VEuPathDB" id="HostDB:ENSMUSG00000036067"/>
<dbReference type="eggNOG" id="KOG0254">
    <property type="taxonomic scope" value="Eukaryota"/>
</dbReference>
<dbReference type="GeneTree" id="ENSGT00940000159976"/>
<dbReference type="HOGENOM" id="CLU_001265_30_5_1"/>
<dbReference type="InParanoid" id="Q3UDF0"/>
<dbReference type="OMA" id="VTCVLVY"/>
<dbReference type="OrthoDB" id="6612291at2759"/>
<dbReference type="PhylomeDB" id="Q3UDF0"/>
<dbReference type="TreeFam" id="TF325324"/>
<dbReference type="Reactome" id="R-MMU-189200">
    <property type="pathway name" value="Cellular hexose transport"/>
</dbReference>
<dbReference type="BioGRID-ORCS" id="227659">
    <property type="hits" value="6 hits in 81 CRISPR screens"/>
</dbReference>
<dbReference type="PRO" id="PR:Q3UDF0"/>
<dbReference type="Proteomes" id="UP000000589">
    <property type="component" value="Chromosome 2"/>
</dbReference>
<dbReference type="RNAct" id="Q3UDF0">
    <property type="molecule type" value="protein"/>
</dbReference>
<dbReference type="Bgee" id="ENSMUSG00000036067">
    <property type="expression patterns" value="Expressed in granulocyte and 104 other cell types or tissues"/>
</dbReference>
<dbReference type="ExpressionAtlas" id="Q3UDF0">
    <property type="expression patterns" value="baseline and differential"/>
</dbReference>
<dbReference type="GO" id="GO:0005765">
    <property type="term" value="C:lysosomal membrane"/>
    <property type="evidence" value="ECO:0000250"/>
    <property type="project" value="UniProtKB"/>
</dbReference>
<dbReference type="GO" id="GO:0022857">
    <property type="term" value="F:transmembrane transporter activity"/>
    <property type="evidence" value="ECO:0007669"/>
    <property type="project" value="InterPro"/>
</dbReference>
<dbReference type="GO" id="GO:0006110">
    <property type="term" value="P:regulation of glycolytic process"/>
    <property type="evidence" value="ECO:0000315"/>
    <property type="project" value="UniProtKB"/>
</dbReference>
<dbReference type="FunFam" id="1.20.1250.20:FF:000221">
    <property type="entry name" value="solute carrier family 2, facilitated glucose transporter member 6"/>
    <property type="match status" value="1"/>
</dbReference>
<dbReference type="Gene3D" id="1.20.1250.20">
    <property type="entry name" value="MFS general substrate transporter like domains"/>
    <property type="match status" value="1"/>
</dbReference>
<dbReference type="InterPro" id="IPR020846">
    <property type="entry name" value="MFS_dom"/>
</dbReference>
<dbReference type="InterPro" id="IPR005828">
    <property type="entry name" value="MFS_sugar_transport-like"/>
</dbReference>
<dbReference type="InterPro" id="IPR036259">
    <property type="entry name" value="MFS_trans_sf"/>
</dbReference>
<dbReference type="InterPro" id="IPR050549">
    <property type="entry name" value="MFS_Trehalose_Transporter"/>
</dbReference>
<dbReference type="InterPro" id="IPR003663">
    <property type="entry name" value="Sugar/inositol_transpt"/>
</dbReference>
<dbReference type="InterPro" id="IPR005829">
    <property type="entry name" value="Sugar_transporter_CS"/>
</dbReference>
<dbReference type="NCBIfam" id="TIGR00879">
    <property type="entry name" value="SP"/>
    <property type="match status" value="1"/>
</dbReference>
<dbReference type="PANTHER" id="PTHR48021">
    <property type="match status" value="1"/>
</dbReference>
<dbReference type="PANTHER" id="PTHR48021:SF59">
    <property type="entry name" value="SOLUTE CARRIER FAMILY 2, FACILITATED GLUCOSE TRANSPORTER MEMBER 6"/>
    <property type="match status" value="1"/>
</dbReference>
<dbReference type="Pfam" id="PF00083">
    <property type="entry name" value="Sugar_tr"/>
    <property type="match status" value="1"/>
</dbReference>
<dbReference type="PRINTS" id="PR00171">
    <property type="entry name" value="SUGRTRNSPORT"/>
</dbReference>
<dbReference type="SUPFAM" id="SSF103473">
    <property type="entry name" value="MFS general substrate transporter"/>
    <property type="match status" value="1"/>
</dbReference>
<dbReference type="PROSITE" id="PS50850">
    <property type="entry name" value="MFS"/>
    <property type="match status" value="1"/>
</dbReference>
<dbReference type="PROSITE" id="PS00216">
    <property type="entry name" value="SUGAR_TRANSPORT_1"/>
    <property type="match status" value="1"/>
</dbReference>
<dbReference type="PROSITE" id="PS00217">
    <property type="entry name" value="SUGAR_TRANSPORT_2"/>
    <property type="match status" value="1"/>
</dbReference>
<evidence type="ECO:0000250" key="1">
    <source>
        <dbReference type="UniProtKB" id="P11169"/>
    </source>
</evidence>
<evidence type="ECO:0000250" key="2">
    <source>
        <dbReference type="UniProtKB" id="Q9UGQ3"/>
    </source>
</evidence>
<evidence type="ECO:0000255" key="3"/>
<evidence type="ECO:0000269" key="4">
    <source>
    </source>
</evidence>
<evidence type="ECO:0000269" key="5">
    <source>
    </source>
</evidence>
<evidence type="ECO:0000303" key="6">
    <source>
    </source>
</evidence>
<evidence type="ECO:0000305" key="7"/>
<evidence type="ECO:0000312" key="8">
    <source>
        <dbReference type="MGI" id="MGI:2443286"/>
    </source>
</evidence>
<feature type="chain" id="PRO_0000447625" description="Solute carrier family 2, facilitated glucose transporter member 6">
    <location>
        <begin position="1"/>
        <end position="497"/>
    </location>
</feature>
<feature type="topological domain" description="Cytoplasmic" evidence="7">
    <location>
        <begin position="1"/>
        <end position="36"/>
    </location>
</feature>
<feature type="transmembrane region" description="Helical; Name=1" evidence="3">
    <location>
        <begin position="37"/>
        <end position="57"/>
    </location>
</feature>
<feature type="topological domain" description="Extracellular" evidence="7">
    <location>
        <begin position="58"/>
        <end position="80"/>
    </location>
</feature>
<feature type="transmembrane region" description="Helical; Name=2" evidence="3">
    <location>
        <begin position="81"/>
        <end position="101"/>
    </location>
</feature>
<feature type="topological domain" description="Cytoplasmic" evidence="7">
    <location>
        <begin position="102"/>
        <end position="115"/>
    </location>
</feature>
<feature type="transmembrane region" description="Helical; Name=3" evidence="3">
    <location>
        <begin position="116"/>
        <end position="136"/>
    </location>
</feature>
<feature type="topological domain" description="Extracellular" evidence="7">
    <location>
        <begin position="137"/>
        <end position="138"/>
    </location>
</feature>
<feature type="transmembrane region" description="Helical; Name=4" evidence="3">
    <location>
        <begin position="139"/>
        <end position="159"/>
    </location>
</feature>
<feature type="topological domain" description="Cytoplasmic" evidence="7">
    <location>
        <begin position="160"/>
        <end position="171"/>
    </location>
</feature>
<feature type="transmembrane region" description="Helical; Name=5" evidence="3">
    <location>
        <begin position="172"/>
        <end position="192"/>
    </location>
</feature>
<feature type="topological domain" description="Extracellular" evidence="7">
    <location>
        <position position="193"/>
    </location>
</feature>
<feature type="transmembrane region" description="Helical; Name=6" evidence="3">
    <location>
        <begin position="194"/>
        <end position="214"/>
    </location>
</feature>
<feature type="topological domain" description="Cytoplasmic" evidence="7">
    <location>
        <begin position="215"/>
        <end position="273"/>
    </location>
</feature>
<feature type="transmembrane region" description="Helical; Name=7" evidence="3">
    <location>
        <begin position="274"/>
        <end position="294"/>
    </location>
</feature>
<feature type="topological domain" description="Extracellular" evidence="7">
    <location>
        <begin position="295"/>
        <end position="312"/>
    </location>
</feature>
<feature type="transmembrane region" description="Helical; Name=8" evidence="3">
    <location>
        <begin position="313"/>
        <end position="333"/>
    </location>
</feature>
<feature type="topological domain" description="Cytoplasmic" evidence="7">
    <location>
        <begin position="334"/>
        <end position="337"/>
    </location>
</feature>
<feature type="transmembrane region" description="Helical; Name=9" evidence="3">
    <location>
        <begin position="338"/>
        <end position="358"/>
    </location>
</feature>
<feature type="topological domain" description="Extracellular" evidence="7">
    <location>
        <begin position="359"/>
        <end position="385"/>
    </location>
</feature>
<feature type="transmembrane region" description="Helical; Name=10" evidence="3">
    <location>
        <begin position="386"/>
        <end position="406"/>
    </location>
</feature>
<feature type="topological domain" description="Cytoplasmic" evidence="7">
    <location>
        <begin position="407"/>
        <end position="425"/>
    </location>
</feature>
<feature type="transmembrane region" description="Helical; Name=11" evidence="3">
    <location>
        <begin position="426"/>
        <end position="446"/>
    </location>
</feature>
<feature type="topological domain" description="Extracellular" evidence="7">
    <location>
        <position position="447"/>
    </location>
</feature>
<feature type="transmembrane region" description="Helical; Name=12" evidence="3">
    <location>
        <begin position="448"/>
        <end position="468"/>
    </location>
</feature>
<feature type="topological domain" description="Cytoplasmic" evidence="7">
    <location>
        <begin position="469"/>
        <end position="497"/>
    </location>
</feature>
<feature type="short sequence motif" description="Dileucine internalization motif" evidence="3">
    <location>
        <begin position="5"/>
        <end position="6"/>
    </location>
</feature>
<feature type="binding site" evidence="1">
    <location>
        <position position="173"/>
    </location>
    <ligand>
        <name>a D-hexose</name>
        <dbReference type="ChEBI" id="CHEBI:4194"/>
    </ligand>
</feature>
<feature type="binding site" evidence="1">
    <location>
        <begin position="284"/>
        <end position="285"/>
    </location>
    <ligand>
        <name>a D-hexose</name>
        <dbReference type="ChEBI" id="CHEBI:4194"/>
    </ligand>
</feature>
<feature type="binding site" evidence="1">
    <location>
        <position position="408"/>
    </location>
    <ligand>
        <name>a D-hexose</name>
        <dbReference type="ChEBI" id="CHEBI:4194"/>
    </ligand>
</feature>
<feature type="glycosylation site" description="N-linked (GlcNAc...) asparagine" evidence="3">
    <location>
        <position position="302"/>
    </location>
</feature>
<feature type="glycosylation site" description="N-linked (GlcNAc...) asparagine" evidence="3">
    <location>
        <position position="368"/>
    </location>
</feature>
<feature type="splice variant" id="VSP_060214" description="In isoform 2.">
    <original>SASVMFAANLTLGLYVQFVPRPLTPNSTVEIVTLGDTAFNYLTLIPLLATMLFIM</original>
    <variation>S</variation>
    <location>
        <begin position="343"/>
        <end position="397"/>
    </location>
</feature>
<feature type="sequence conflict" description="In Ref. 1; BAE38697." evidence="7" ref="1">
    <original>T</original>
    <variation>A</variation>
    <location>
        <position position="8"/>
    </location>
</feature>
<feature type="sequence conflict" description="In Ref. 1; BAC40811." evidence="7" ref="1">
    <original>T</original>
    <variation>I</variation>
    <location>
        <position position="375"/>
    </location>
</feature>
<accession>Q3UDF0</accession>
<accession>A2AR26</accession>
<accession>Q3TLU5</accession>
<accession>Q8BTN2</accession>
<comment type="function">
    <text evidence="2 5">Probable sugar transporter that acts as a regulator of glycolysis in macrophages (PubMed:30431159). Does not transport glucose (By similarity).</text>
</comment>
<comment type="subcellular location">
    <subcellularLocation>
        <location evidence="2">Lysosome membrane</location>
        <topology evidence="3">Multi-pass membrane protein</topology>
    </subcellularLocation>
</comment>
<comment type="alternative products">
    <event type="alternative splicing"/>
    <isoform>
        <id>Q3UDF0-1</id>
        <name>1</name>
        <sequence type="displayed"/>
    </isoform>
    <isoform>
        <id>Q3UDF0-2</id>
        <name>2</name>
        <sequence type="described" ref="VSP_060214"/>
    </isoform>
</comment>
<comment type="tissue specificity">
    <text evidence="4">Mainly expressed in brain and spleen (PubMed:29664675). Also expressed in lung, heart, muscle, liver, kidney, fat, whole blood, testes, ovaries and uterus (PubMed:29664675).</text>
</comment>
<comment type="disruption phenotype">
    <text evidence="4 5">Mild metabolic effects (PubMed:29664675, PubMed:30431159). Mice grow normally and glucose metabolism in male or female mice is normal (PubMed:29664675). Minimal metabolic effects are observed: female mice display a minor decrease in fat accumulation when fed Western diet and have a lower respiratory exchange ratio when fed chow diet (PubMed:29664675). Mice also exhibit a subtle phenotype in response to lipopolysaccharide administration, characterized by slight changes in the metabolome associated with glycolysis (PubMed:30431159).</text>
</comment>
<comment type="similarity">
    <text evidence="7">Belongs to the major facilitator superfamily. Sugar transporter (TC 2.A.1.1) family.</text>
</comment>
<sequence length="497" mass="54433">MQEPLLRTEGLDYDTFPEVPATPGERERAGALKNRRVFLATFAAVLGNFSFGYALVYTSPVIPELKLSSDPALHLDKIQASWFGSVFTLGAAAGGLSAMLLNDLLGRKLSIMFSAVPSAIGYAIMAGARGLWMLLLGRMLTGFAGGLTAACIPVYVSEIAPPDVRGALGATPQLMAVFGSLSLYALGLLLPWRWLAVAGEGPVLIMILLLSFMPNSPRFLLSKSRDEEALQALTWLRADSEVHWEFEQIQDNVRRQSSRVSWAEAREPRVYRPVLIAVLMRFLQQLTGITPILVYLQTIFDNTSVVLPSQQDAAIVGAVRLLSVLIAAVTMDLAGRKVLLYVSASVMFAANLTLGLYVQFVPRPLTPNSTVEIVTLGDTAFNYLTLIPLLATMLFIMGYAMGWGPITWLLMSEVLPLRARGVASGLCVLVSWLTAFVLTNYFLLAVNAFGLQVPFFFFSAICLLSLLFTGCCVPETRGRSLEQIEAFFHTRRMSFRP</sequence>